<reference key="1">
    <citation type="journal article" date="2002" name="Nature">
        <title>The genome sequence of Schizosaccharomyces pombe.</title>
        <authorList>
            <person name="Wood V."/>
            <person name="Gwilliam R."/>
            <person name="Rajandream M.A."/>
            <person name="Lyne M.H."/>
            <person name="Lyne R."/>
            <person name="Stewart A."/>
            <person name="Sgouros J.G."/>
            <person name="Peat N."/>
            <person name="Hayles J."/>
            <person name="Baker S.G."/>
            <person name="Basham D."/>
            <person name="Bowman S."/>
            <person name="Brooks K."/>
            <person name="Brown D."/>
            <person name="Brown S."/>
            <person name="Chillingworth T."/>
            <person name="Churcher C.M."/>
            <person name="Collins M."/>
            <person name="Connor R."/>
            <person name="Cronin A."/>
            <person name="Davis P."/>
            <person name="Feltwell T."/>
            <person name="Fraser A."/>
            <person name="Gentles S."/>
            <person name="Goble A."/>
            <person name="Hamlin N."/>
            <person name="Harris D.E."/>
            <person name="Hidalgo J."/>
            <person name="Hodgson G."/>
            <person name="Holroyd S."/>
            <person name="Hornsby T."/>
            <person name="Howarth S."/>
            <person name="Huckle E.J."/>
            <person name="Hunt S."/>
            <person name="Jagels K."/>
            <person name="James K.D."/>
            <person name="Jones L."/>
            <person name="Jones M."/>
            <person name="Leather S."/>
            <person name="McDonald S."/>
            <person name="McLean J."/>
            <person name="Mooney P."/>
            <person name="Moule S."/>
            <person name="Mungall K.L."/>
            <person name="Murphy L.D."/>
            <person name="Niblett D."/>
            <person name="Odell C."/>
            <person name="Oliver K."/>
            <person name="O'Neil S."/>
            <person name="Pearson D."/>
            <person name="Quail M.A."/>
            <person name="Rabbinowitsch E."/>
            <person name="Rutherford K.M."/>
            <person name="Rutter S."/>
            <person name="Saunders D."/>
            <person name="Seeger K."/>
            <person name="Sharp S."/>
            <person name="Skelton J."/>
            <person name="Simmonds M.N."/>
            <person name="Squares R."/>
            <person name="Squares S."/>
            <person name="Stevens K."/>
            <person name="Taylor K."/>
            <person name="Taylor R.G."/>
            <person name="Tivey A."/>
            <person name="Walsh S.V."/>
            <person name="Warren T."/>
            <person name="Whitehead S."/>
            <person name="Woodward J.R."/>
            <person name="Volckaert G."/>
            <person name="Aert R."/>
            <person name="Robben J."/>
            <person name="Grymonprez B."/>
            <person name="Weltjens I."/>
            <person name="Vanstreels E."/>
            <person name="Rieger M."/>
            <person name="Schaefer M."/>
            <person name="Mueller-Auer S."/>
            <person name="Gabel C."/>
            <person name="Fuchs M."/>
            <person name="Duesterhoeft A."/>
            <person name="Fritzc C."/>
            <person name="Holzer E."/>
            <person name="Moestl D."/>
            <person name="Hilbert H."/>
            <person name="Borzym K."/>
            <person name="Langer I."/>
            <person name="Beck A."/>
            <person name="Lehrach H."/>
            <person name="Reinhardt R."/>
            <person name="Pohl T.M."/>
            <person name="Eger P."/>
            <person name="Zimmermann W."/>
            <person name="Wedler H."/>
            <person name="Wambutt R."/>
            <person name="Purnelle B."/>
            <person name="Goffeau A."/>
            <person name="Cadieu E."/>
            <person name="Dreano S."/>
            <person name="Gloux S."/>
            <person name="Lelaure V."/>
            <person name="Mottier S."/>
            <person name="Galibert F."/>
            <person name="Aves S.J."/>
            <person name="Xiang Z."/>
            <person name="Hunt C."/>
            <person name="Moore K."/>
            <person name="Hurst S.M."/>
            <person name="Lucas M."/>
            <person name="Rochet M."/>
            <person name="Gaillardin C."/>
            <person name="Tallada V.A."/>
            <person name="Garzon A."/>
            <person name="Thode G."/>
            <person name="Daga R.R."/>
            <person name="Cruzado L."/>
            <person name="Jimenez J."/>
            <person name="Sanchez M."/>
            <person name="del Rey F."/>
            <person name="Benito J."/>
            <person name="Dominguez A."/>
            <person name="Revuelta J.L."/>
            <person name="Moreno S."/>
            <person name="Armstrong J."/>
            <person name="Forsburg S.L."/>
            <person name="Cerutti L."/>
            <person name="Lowe T."/>
            <person name="McCombie W.R."/>
            <person name="Paulsen I."/>
            <person name="Potashkin J."/>
            <person name="Shpakovski G.V."/>
            <person name="Ussery D."/>
            <person name="Barrell B.G."/>
            <person name="Nurse P."/>
        </authorList>
    </citation>
    <scope>NUCLEOTIDE SEQUENCE [LARGE SCALE GENOMIC DNA]</scope>
    <source>
        <strain>972 / ATCC 24843</strain>
    </source>
</reference>
<reference key="2">
    <citation type="journal article" date="1997" name="DNA Res.">
        <title>Identification of open reading frames in Schizosaccharomyces pombe cDNAs.</title>
        <authorList>
            <person name="Yoshioka S."/>
            <person name="Kato K."/>
            <person name="Nakai K."/>
            <person name="Okayama H."/>
            <person name="Nojima H."/>
        </authorList>
    </citation>
    <scope>NUCLEOTIDE SEQUENCE [LARGE SCALE MRNA] OF 1-157</scope>
    <source>
        <strain>PR745</strain>
    </source>
</reference>
<reference key="3">
    <citation type="journal article" date="2006" name="Nat. Biotechnol.">
        <title>ORFeome cloning and global analysis of protein localization in the fission yeast Schizosaccharomyces pombe.</title>
        <authorList>
            <person name="Matsuyama A."/>
            <person name="Arai R."/>
            <person name="Yashiroda Y."/>
            <person name="Shirai A."/>
            <person name="Kamata A."/>
            <person name="Sekido S."/>
            <person name="Kobayashi Y."/>
            <person name="Hashimoto A."/>
            <person name="Hamamoto M."/>
            <person name="Hiraoka Y."/>
            <person name="Horinouchi S."/>
            <person name="Yoshida M."/>
        </authorList>
    </citation>
    <scope>SUBCELLULAR LOCATION [LARGE SCALE ANALYSIS]</scope>
</reference>
<reference key="4">
    <citation type="journal article" date="2008" name="J. Proteome Res.">
        <title>Phosphoproteome analysis of fission yeast.</title>
        <authorList>
            <person name="Wilson-Grady J.T."/>
            <person name="Villen J."/>
            <person name="Gygi S.P."/>
        </authorList>
    </citation>
    <scope>PHOSPHORYLATION [LARGE SCALE ANALYSIS] AT SER-117; SER-121 AND SER-379</scope>
    <scope>IDENTIFICATION BY MASS SPECTROMETRY</scope>
</reference>
<comment type="subcellular location">
    <subcellularLocation>
        <location evidence="2">Nucleus</location>
    </subcellularLocation>
</comment>
<comment type="sequence caution" evidence="4">
    <conflict type="erroneous termination">
        <sequence resource="EMBL-CDS" id="BAA13935"/>
    </conflict>
    <text>Truncated C-terminus.</text>
</comment>
<comment type="sequence caution" evidence="4">
    <conflict type="frameshift">
        <sequence resource="EMBL-CDS" id="BAA13935"/>
    </conflict>
</comment>
<feature type="chain" id="PRO_0000353135" description="Uncharacterized protein C1259.08">
    <location>
        <begin position="1"/>
        <end position="394"/>
    </location>
</feature>
<feature type="region of interest" description="Disordered" evidence="1">
    <location>
        <begin position="177"/>
        <end position="295"/>
    </location>
</feature>
<feature type="region of interest" description="Disordered" evidence="1">
    <location>
        <begin position="315"/>
        <end position="347"/>
    </location>
</feature>
<feature type="region of interest" description="Disordered" evidence="1">
    <location>
        <begin position="370"/>
        <end position="394"/>
    </location>
</feature>
<feature type="compositionally biased region" description="Acidic residues" evidence="1">
    <location>
        <begin position="178"/>
        <end position="190"/>
    </location>
</feature>
<feature type="compositionally biased region" description="Polar residues" evidence="1">
    <location>
        <begin position="191"/>
        <end position="207"/>
    </location>
</feature>
<feature type="compositionally biased region" description="Polar residues" evidence="1">
    <location>
        <begin position="216"/>
        <end position="230"/>
    </location>
</feature>
<feature type="compositionally biased region" description="Acidic residues" evidence="1">
    <location>
        <begin position="231"/>
        <end position="263"/>
    </location>
</feature>
<feature type="compositionally biased region" description="Acidic residues" evidence="1">
    <location>
        <begin position="284"/>
        <end position="295"/>
    </location>
</feature>
<feature type="compositionally biased region" description="Polar residues" evidence="1">
    <location>
        <begin position="370"/>
        <end position="379"/>
    </location>
</feature>
<feature type="modified residue" description="Phosphoserine" evidence="3">
    <location>
        <position position="117"/>
    </location>
</feature>
<feature type="modified residue" description="Phosphoserine" evidence="3">
    <location>
        <position position="121"/>
    </location>
</feature>
<feature type="modified residue" description="Phosphoserine" evidence="3">
    <location>
        <position position="379"/>
    </location>
</feature>
<feature type="sequence conflict" description="In Ref. 2; BAA13935." evidence="4" ref="2">
    <original>Q</original>
    <variation>R</variation>
    <location>
        <position position="81"/>
    </location>
</feature>
<keyword id="KW-0539">Nucleus</keyword>
<keyword id="KW-0597">Phosphoprotein</keyword>
<keyword id="KW-1185">Reference proteome</keyword>
<accession>O94708</accession>
<accession>P78923</accession>
<accession>Q1L839</accession>
<dbReference type="EMBL" id="CU329672">
    <property type="protein sequence ID" value="CAA22546.1"/>
    <property type="molecule type" value="Genomic_DNA"/>
</dbReference>
<dbReference type="EMBL" id="D89274">
    <property type="protein sequence ID" value="BAA13935.1"/>
    <property type="status" value="ALT_SEQ"/>
    <property type="molecule type" value="mRNA"/>
</dbReference>
<dbReference type="PIR" id="T40897">
    <property type="entry name" value="T40897"/>
</dbReference>
<dbReference type="PIR" id="T43204">
    <property type="entry name" value="T43204"/>
</dbReference>
<dbReference type="RefSeq" id="NP_588064.1">
    <property type="nucleotide sequence ID" value="NM_001023056.2"/>
</dbReference>
<dbReference type="BioGRID" id="275664">
    <property type="interactions" value="22"/>
</dbReference>
<dbReference type="STRING" id="284812.O94708"/>
<dbReference type="iPTMnet" id="O94708"/>
<dbReference type="PaxDb" id="4896-SPCC1259.08.1"/>
<dbReference type="EnsemblFungi" id="SPCC1259.08.1">
    <property type="protein sequence ID" value="SPCC1259.08.1:pep"/>
    <property type="gene ID" value="SPCC1259.08"/>
</dbReference>
<dbReference type="KEGG" id="spo:2539092"/>
<dbReference type="PomBase" id="SPCC1259.08"/>
<dbReference type="VEuPathDB" id="FungiDB:SPCC1259.08"/>
<dbReference type="eggNOG" id="ENOG502S9SC">
    <property type="taxonomic scope" value="Eukaryota"/>
</dbReference>
<dbReference type="HOGENOM" id="CLU_716019_0_0_1"/>
<dbReference type="InParanoid" id="O94708"/>
<dbReference type="OMA" id="LNREQQY"/>
<dbReference type="PRO" id="PR:O94708"/>
<dbReference type="Proteomes" id="UP000002485">
    <property type="component" value="Chromosome III"/>
</dbReference>
<dbReference type="GO" id="GO:0005634">
    <property type="term" value="C:nucleus"/>
    <property type="evidence" value="ECO:0007005"/>
    <property type="project" value="PomBase"/>
</dbReference>
<dbReference type="InterPro" id="IPR018853">
    <property type="entry name" value="DUF2457"/>
</dbReference>
<dbReference type="Pfam" id="PF10446">
    <property type="entry name" value="DUF2457"/>
    <property type="match status" value="1"/>
</dbReference>
<evidence type="ECO:0000256" key="1">
    <source>
        <dbReference type="SAM" id="MobiDB-lite"/>
    </source>
</evidence>
<evidence type="ECO:0000269" key="2">
    <source>
    </source>
</evidence>
<evidence type="ECO:0000269" key="3">
    <source>
    </source>
</evidence>
<evidence type="ECO:0000305" key="4"/>
<organism>
    <name type="scientific">Schizosaccharomyces pombe (strain 972 / ATCC 24843)</name>
    <name type="common">Fission yeast</name>
    <dbReference type="NCBI Taxonomy" id="284812"/>
    <lineage>
        <taxon>Eukaryota</taxon>
        <taxon>Fungi</taxon>
        <taxon>Dikarya</taxon>
        <taxon>Ascomycota</taxon>
        <taxon>Taphrinomycotina</taxon>
        <taxon>Schizosaccharomycetes</taxon>
        <taxon>Schizosaccharomycetales</taxon>
        <taxon>Schizosaccharomycetaceae</taxon>
        <taxon>Schizosaccharomyces</taxon>
    </lineage>
</organism>
<proteinExistence type="evidence at protein level"/>
<name>YC58_SCHPO</name>
<protein>
    <recommendedName>
        <fullName>Uncharacterized protein C1259.08</fullName>
    </recommendedName>
</protein>
<sequence length="394" mass="43005">MTGLLSILLHYKGNGDLATTDIPSHEKIPSAKRTAVQFCIGPTHEQSPRMSTVSQGRVTFAVLPTKPKDEVTSMKANGSRQSSCIVSNARKRQSVHCLSRSPIPSTRLKENDSRLCSPLASPTGGLKRPAKVSFALANTPSRKGNLVPQSPRRTIATTCKGVLEDVLKKDNELKFNDSDEEDEVDDEEIESFNSFSRKMQTISNSRYRGSPKPNIEKQSCSSESDRVSQISDDEEDEEGSADEEDEEDSDVELSESSLSDDEDSPLRCPSTPVQTAAAPNESQIPDDTDFVPGTFDEDQPACLAFACSLTHANSKRSIMLPQDIDPTFPDSEPEDDGHASSTVGSLSKEEARFKAKAKWNYKSSFSAHVSSEVLRNSKSPPLDIARKAVGAHRV</sequence>
<gene>
    <name type="ORF">SPCC1259.08</name>
</gene>